<protein>
    <recommendedName>
        <fullName>Snake venom serine protease nikobin</fullName>
        <shortName>SVSP</shortName>
        <ecNumber>3.4.21.-</ecNumber>
    </recommendedName>
</protein>
<name>VSP_VIPNI</name>
<gene>
    <name type="primary">sp-VN</name>
</gene>
<comment type="function">
    <text evidence="1">Snake venom serine protease that may act in the hemostasis system of the prey.</text>
</comment>
<comment type="subunit">
    <text evidence="1">Monomer.</text>
</comment>
<comment type="subcellular location">
    <subcellularLocation>
        <location evidence="1">Secreted</location>
    </subcellularLocation>
</comment>
<comment type="tissue specificity">
    <text>Expressed by the venom gland.</text>
</comment>
<comment type="similarity">
    <text evidence="3">Belongs to the peptidase S1 family. Snake venom subfamily.</text>
</comment>
<proteinExistence type="evidence at transcript level"/>
<sequence>MVLIRVLANLLLLQLSYAQKSSELVIGGDECNINEHPFLAFVTSDRRRCAGTLINQEWVLTAAHCNGKYMKIELGVHDKMVRNEDKQTRVPKQKFFCLSSKEYTMWDKDIMLIRLNTPVNNSTHIAPVSLASRPPVVGSVCRIMGWGTISSPKVILPDVPHCANIEIIKYSKCQGVHPELPAKGRVVCAGIWQGGKDSCHGDSGAPLICNGQLQGLLSWGGDPCAQPLQPGLYTDIFDYSDWIQSIIAGNTTATCPP</sequence>
<evidence type="ECO:0000250" key="1"/>
<evidence type="ECO:0000255" key="2"/>
<evidence type="ECO:0000255" key="3">
    <source>
        <dbReference type="PROSITE-ProRule" id="PRU00274"/>
    </source>
</evidence>
<organism>
    <name type="scientific">Vipera nikolskii</name>
    <name type="common">Nikolsky's adder</name>
    <name type="synonym">Vipera berus nikolskii</name>
    <dbReference type="NCBI Taxonomy" id="1808362"/>
    <lineage>
        <taxon>Eukaryota</taxon>
        <taxon>Metazoa</taxon>
        <taxon>Chordata</taxon>
        <taxon>Craniata</taxon>
        <taxon>Vertebrata</taxon>
        <taxon>Euteleostomi</taxon>
        <taxon>Lepidosauria</taxon>
        <taxon>Squamata</taxon>
        <taxon>Bifurcata</taxon>
        <taxon>Unidentata</taxon>
        <taxon>Episquamata</taxon>
        <taxon>Toxicofera</taxon>
        <taxon>Serpentes</taxon>
        <taxon>Colubroidea</taxon>
        <taxon>Viperidae</taxon>
        <taxon>Viperinae</taxon>
        <taxon>Vipera</taxon>
    </lineage>
</organism>
<dbReference type="EC" id="3.4.21.-"/>
<dbReference type="EMBL" id="FR669449">
    <property type="protein sequence ID" value="CBW30778.1"/>
    <property type="molecule type" value="mRNA"/>
</dbReference>
<dbReference type="SMR" id="E5AJX2"/>
<dbReference type="MEROPS" id="S01.354"/>
<dbReference type="GlyCosmos" id="E5AJX2">
    <property type="glycosylation" value="3 sites, No reported glycans"/>
</dbReference>
<dbReference type="GO" id="GO:0005576">
    <property type="term" value="C:extracellular region"/>
    <property type="evidence" value="ECO:0007669"/>
    <property type="project" value="UniProtKB-SubCell"/>
</dbReference>
<dbReference type="GO" id="GO:0030141">
    <property type="term" value="C:secretory granule"/>
    <property type="evidence" value="ECO:0007669"/>
    <property type="project" value="TreeGrafter"/>
</dbReference>
<dbReference type="GO" id="GO:0004252">
    <property type="term" value="F:serine-type endopeptidase activity"/>
    <property type="evidence" value="ECO:0007669"/>
    <property type="project" value="InterPro"/>
</dbReference>
<dbReference type="GO" id="GO:0090729">
    <property type="term" value="F:toxin activity"/>
    <property type="evidence" value="ECO:0007669"/>
    <property type="project" value="UniProtKB-KW"/>
</dbReference>
<dbReference type="GO" id="GO:0006508">
    <property type="term" value="P:proteolysis"/>
    <property type="evidence" value="ECO:0007669"/>
    <property type="project" value="UniProtKB-KW"/>
</dbReference>
<dbReference type="CDD" id="cd00190">
    <property type="entry name" value="Tryp_SPc"/>
    <property type="match status" value="1"/>
</dbReference>
<dbReference type="FunFam" id="2.40.10.10:FF:000010">
    <property type="entry name" value="Kallikrein related peptidase 11"/>
    <property type="match status" value="1"/>
</dbReference>
<dbReference type="Gene3D" id="2.40.10.10">
    <property type="entry name" value="Trypsin-like serine proteases"/>
    <property type="match status" value="2"/>
</dbReference>
<dbReference type="InterPro" id="IPR009003">
    <property type="entry name" value="Peptidase_S1_PA"/>
</dbReference>
<dbReference type="InterPro" id="IPR043504">
    <property type="entry name" value="Peptidase_S1_PA_chymotrypsin"/>
</dbReference>
<dbReference type="InterPro" id="IPR001314">
    <property type="entry name" value="Peptidase_S1A"/>
</dbReference>
<dbReference type="InterPro" id="IPR001254">
    <property type="entry name" value="Trypsin_dom"/>
</dbReference>
<dbReference type="InterPro" id="IPR018114">
    <property type="entry name" value="TRYPSIN_HIS"/>
</dbReference>
<dbReference type="PANTHER" id="PTHR24271:SF47">
    <property type="entry name" value="KALLIKREIN-1"/>
    <property type="match status" value="1"/>
</dbReference>
<dbReference type="PANTHER" id="PTHR24271">
    <property type="entry name" value="KALLIKREIN-RELATED"/>
    <property type="match status" value="1"/>
</dbReference>
<dbReference type="Pfam" id="PF00089">
    <property type="entry name" value="Trypsin"/>
    <property type="match status" value="1"/>
</dbReference>
<dbReference type="PRINTS" id="PR00722">
    <property type="entry name" value="CHYMOTRYPSIN"/>
</dbReference>
<dbReference type="SMART" id="SM00020">
    <property type="entry name" value="Tryp_SPc"/>
    <property type="match status" value="1"/>
</dbReference>
<dbReference type="SUPFAM" id="SSF50494">
    <property type="entry name" value="Trypsin-like serine proteases"/>
    <property type="match status" value="1"/>
</dbReference>
<dbReference type="PROSITE" id="PS50240">
    <property type="entry name" value="TRYPSIN_DOM"/>
    <property type="match status" value="1"/>
</dbReference>
<dbReference type="PROSITE" id="PS00134">
    <property type="entry name" value="TRYPSIN_HIS"/>
    <property type="match status" value="1"/>
</dbReference>
<keyword id="KW-1015">Disulfide bond</keyword>
<keyword id="KW-0325">Glycoprotein</keyword>
<keyword id="KW-1199">Hemostasis impairing toxin</keyword>
<keyword id="KW-0378">Hydrolase</keyword>
<keyword id="KW-0645">Protease</keyword>
<keyword id="KW-0964">Secreted</keyword>
<keyword id="KW-0720">Serine protease</keyword>
<keyword id="KW-0732">Signal</keyword>
<keyword id="KW-0800">Toxin</keyword>
<keyword id="KW-0865">Zymogen</keyword>
<reference key="1">
    <citation type="journal article" date="2011" name="Bioorg. Khim.">
        <title>Molecular cloning and analysis of cDNA sequences encoding serine proteinase and Kunitz type inhibitor in venom gland of Vipera nikolskii viper.</title>
        <authorList>
            <person name="Ramazanova A.S."/>
            <person name="Fil'kin S.I."/>
            <person name="Starkov V.G."/>
            <person name="Utkin I.N."/>
        </authorList>
    </citation>
    <scope>NUCLEOTIDE SEQUENCE [MRNA]</scope>
    <source>
        <tissue>Venom gland</tissue>
    </source>
</reference>
<accession>E5AJX2</accession>
<feature type="signal peptide" evidence="2">
    <location>
        <begin position="1"/>
        <end position="18"/>
    </location>
</feature>
<feature type="propeptide" id="PRO_5000666457" evidence="1">
    <location>
        <begin position="19"/>
        <end position="24"/>
    </location>
</feature>
<feature type="chain" id="PRO_5000666458" description="Snake venom serine protease nikobin">
    <location>
        <begin position="25"/>
        <end position="257"/>
    </location>
</feature>
<feature type="domain" description="Peptidase S1" evidence="3">
    <location>
        <begin position="25"/>
        <end position="248"/>
    </location>
</feature>
<feature type="active site" description="Charge relay system" evidence="1">
    <location>
        <position position="64"/>
    </location>
</feature>
<feature type="active site" description="Charge relay system" evidence="1">
    <location>
        <position position="109"/>
    </location>
</feature>
<feature type="active site" description="Charge relay system" evidence="1">
    <location>
        <position position="203"/>
    </location>
</feature>
<feature type="glycosylation site" description="N-linked (GlcNAc...) asparagine" evidence="2">
    <location>
        <position position="120"/>
    </location>
</feature>
<feature type="glycosylation site" description="N-linked (GlcNAc...) asparagine" evidence="2">
    <location>
        <position position="121"/>
    </location>
</feature>
<feature type="glycosylation site" description="N-linked (GlcNAc...) asparagine" evidence="2">
    <location>
        <position position="250"/>
    </location>
</feature>
<feature type="disulfide bond" evidence="3">
    <location>
        <begin position="31"/>
        <end position="162"/>
    </location>
</feature>
<feature type="disulfide bond" evidence="3">
    <location>
        <begin position="49"/>
        <end position="65"/>
    </location>
</feature>
<feature type="disulfide bond" evidence="3">
    <location>
        <begin position="97"/>
        <end position="255"/>
    </location>
</feature>
<feature type="disulfide bond" evidence="3">
    <location>
        <begin position="141"/>
        <end position="209"/>
    </location>
</feature>
<feature type="disulfide bond" evidence="3">
    <location>
        <begin position="173"/>
        <end position="188"/>
    </location>
</feature>
<feature type="disulfide bond" evidence="3">
    <location>
        <begin position="199"/>
        <end position="224"/>
    </location>
</feature>